<accession>P58217</accession>
<feature type="chain" id="PRO_0000201647" description="DinI-like protein Z2083/ECs2153">
    <location>
        <begin position="1"/>
        <end position="80"/>
    </location>
</feature>
<sequence>MPHRYPAAKINKMPKGSVPALQQEMLRRVSKRYDDVEVIIKSTSNDGLSVTRTADKDSAKTFVQETLKDTWESADEWFVR</sequence>
<organism>
    <name type="scientific">Escherichia coli O157:H7</name>
    <dbReference type="NCBI Taxonomy" id="83334"/>
    <lineage>
        <taxon>Bacteria</taxon>
        <taxon>Pseudomonadati</taxon>
        <taxon>Pseudomonadota</taxon>
        <taxon>Gammaproteobacteria</taxon>
        <taxon>Enterobacterales</taxon>
        <taxon>Enterobacteriaceae</taxon>
        <taxon>Escherichia</taxon>
    </lineage>
</organism>
<dbReference type="EMBL" id="AE005174">
    <property type="protein sequence ID" value="AAG56153.1"/>
    <property type="status" value="ALT_INIT"/>
    <property type="molecule type" value="Genomic_DNA"/>
</dbReference>
<dbReference type="EMBL" id="BA000007">
    <property type="protein sequence ID" value="BAB35576.2"/>
    <property type="status" value="ALT_INIT"/>
    <property type="molecule type" value="Genomic_DNA"/>
</dbReference>
<dbReference type="PIR" id="A90898">
    <property type="entry name" value="A90898"/>
</dbReference>
<dbReference type="PIR" id="E85711">
    <property type="entry name" value="E85711"/>
</dbReference>
<dbReference type="RefSeq" id="NP_310180.1">
    <property type="nucleotide sequence ID" value="NC_002695.1"/>
</dbReference>
<dbReference type="RefSeq" id="WP_001120551.1">
    <property type="nucleotide sequence ID" value="NZ_SWKA01000005.1"/>
</dbReference>
<dbReference type="SMR" id="P58217"/>
<dbReference type="STRING" id="155864.Z2083"/>
<dbReference type="KEGG" id="ece:Z2083"/>
<dbReference type="KEGG" id="ecs:ECs_2153"/>
<dbReference type="PATRIC" id="fig|386585.9.peg.2261"/>
<dbReference type="HOGENOM" id="CLU_139795_1_0_6"/>
<dbReference type="Proteomes" id="UP000000558">
    <property type="component" value="Chromosome"/>
</dbReference>
<dbReference type="Proteomes" id="UP000002519">
    <property type="component" value="Chromosome"/>
</dbReference>
<dbReference type="GO" id="GO:0006281">
    <property type="term" value="P:DNA repair"/>
    <property type="evidence" value="ECO:0007669"/>
    <property type="project" value="UniProtKB-KW"/>
</dbReference>
<dbReference type="GO" id="GO:0009432">
    <property type="term" value="P:SOS response"/>
    <property type="evidence" value="ECO:0007669"/>
    <property type="project" value="TreeGrafter"/>
</dbReference>
<dbReference type="Gene3D" id="3.30.910.10">
    <property type="entry name" value="DinI-like"/>
    <property type="match status" value="1"/>
</dbReference>
<dbReference type="InterPro" id="IPR036687">
    <property type="entry name" value="DinI-like_sf"/>
</dbReference>
<dbReference type="InterPro" id="IPR010391">
    <property type="entry name" value="DNA_damage-inducible_DinI-like"/>
</dbReference>
<dbReference type="PANTHER" id="PTHR36572:SF2">
    <property type="entry name" value="DNA DAMAGE-INDUCIBLE PROTEIN I"/>
    <property type="match status" value="1"/>
</dbReference>
<dbReference type="PANTHER" id="PTHR36572">
    <property type="entry name" value="DNA DAMAGE-INDUCIBLE PROTEIN I-RELATED"/>
    <property type="match status" value="1"/>
</dbReference>
<dbReference type="Pfam" id="PF06183">
    <property type="entry name" value="DinI"/>
    <property type="match status" value="1"/>
</dbReference>
<dbReference type="SUPFAM" id="SSF54857">
    <property type="entry name" value="DNA damage-inducible protein DinI"/>
    <property type="match status" value="1"/>
</dbReference>
<gene>
    <name type="ordered locus">Z2083</name>
    <name type="ordered locus">ECs2153</name>
</gene>
<evidence type="ECO:0000305" key="1"/>
<comment type="sequence caution" evidence="1">
    <conflict type="erroneous initiation">
        <sequence resource="EMBL-CDS" id="AAG56153"/>
    </conflict>
    <text>Extended N-terminus.</text>
</comment>
<comment type="sequence caution" evidence="1">
    <conflict type="erroneous initiation">
        <sequence resource="EMBL-CDS" id="BAB35576"/>
    </conflict>
    <text>Extended N-terminus.</text>
</comment>
<keyword id="KW-0227">DNA damage</keyword>
<keyword id="KW-0234">DNA repair</keyword>
<keyword id="KW-1185">Reference proteome</keyword>
<proteinExistence type="predicted"/>
<protein>
    <recommendedName>
        <fullName>DinI-like protein Z2083/ECs2153</fullName>
    </recommendedName>
</protein>
<name>DINI2_ECO57</name>
<reference key="1">
    <citation type="journal article" date="2001" name="Nature">
        <title>Genome sequence of enterohaemorrhagic Escherichia coli O157:H7.</title>
        <authorList>
            <person name="Perna N.T."/>
            <person name="Plunkett G. III"/>
            <person name="Burland V."/>
            <person name="Mau B."/>
            <person name="Glasner J.D."/>
            <person name="Rose D.J."/>
            <person name="Mayhew G.F."/>
            <person name="Evans P.S."/>
            <person name="Gregor J."/>
            <person name="Kirkpatrick H.A."/>
            <person name="Posfai G."/>
            <person name="Hackett J."/>
            <person name="Klink S."/>
            <person name="Boutin A."/>
            <person name="Shao Y."/>
            <person name="Miller L."/>
            <person name="Grotbeck E.J."/>
            <person name="Davis N.W."/>
            <person name="Lim A."/>
            <person name="Dimalanta E.T."/>
            <person name="Potamousis K."/>
            <person name="Apodaca J."/>
            <person name="Anantharaman T.S."/>
            <person name="Lin J."/>
            <person name="Yen G."/>
            <person name="Schwartz D.C."/>
            <person name="Welch R.A."/>
            <person name="Blattner F.R."/>
        </authorList>
    </citation>
    <scope>NUCLEOTIDE SEQUENCE [LARGE SCALE GENOMIC DNA]</scope>
    <source>
        <strain>O157:H7 / EDL933 / ATCC 700927 / EHEC</strain>
    </source>
</reference>
<reference key="2">
    <citation type="journal article" date="2001" name="DNA Res.">
        <title>Complete genome sequence of enterohemorrhagic Escherichia coli O157:H7 and genomic comparison with a laboratory strain K-12.</title>
        <authorList>
            <person name="Hayashi T."/>
            <person name="Makino K."/>
            <person name="Ohnishi M."/>
            <person name="Kurokawa K."/>
            <person name="Ishii K."/>
            <person name="Yokoyama K."/>
            <person name="Han C.-G."/>
            <person name="Ohtsubo E."/>
            <person name="Nakayama K."/>
            <person name="Murata T."/>
            <person name="Tanaka M."/>
            <person name="Tobe T."/>
            <person name="Iida T."/>
            <person name="Takami H."/>
            <person name="Honda T."/>
            <person name="Sasakawa C."/>
            <person name="Ogasawara N."/>
            <person name="Yasunaga T."/>
            <person name="Kuhara S."/>
            <person name="Shiba T."/>
            <person name="Hattori M."/>
            <person name="Shinagawa H."/>
        </authorList>
    </citation>
    <scope>NUCLEOTIDE SEQUENCE [LARGE SCALE GENOMIC DNA]</scope>
    <source>
        <strain>O157:H7 / Sakai / RIMD 0509952 / EHEC</strain>
    </source>
</reference>